<proteinExistence type="inferred from homology"/>
<feature type="chain" id="PRO_0000370104" description="3-deoxy-manno-octulosonate cytidylyltransferase">
    <location>
        <begin position="1"/>
        <end position="253"/>
    </location>
</feature>
<dbReference type="EC" id="2.7.7.38" evidence="1"/>
<dbReference type="EMBL" id="AE002098">
    <property type="protein sequence ID" value="AAF41093.1"/>
    <property type="molecule type" value="Genomic_DNA"/>
</dbReference>
<dbReference type="PIR" id="A81171">
    <property type="entry name" value="A81171"/>
</dbReference>
<dbReference type="RefSeq" id="NP_273717.1">
    <property type="nucleotide sequence ID" value="NC_003112.2"/>
</dbReference>
<dbReference type="RefSeq" id="WP_002225504.1">
    <property type="nucleotide sequence ID" value="NC_003112.2"/>
</dbReference>
<dbReference type="SMR" id="Q9K0D6"/>
<dbReference type="FunCoup" id="Q9K0D6">
    <property type="interactions" value="403"/>
</dbReference>
<dbReference type="STRING" id="122586.NMB0675"/>
<dbReference type="PaxDb" id="122586-NMB0675"/>
<dbReference type="KEGG" id="nme:NMB0675"/>
<dbReference type="PATRIC" id="fig|122586.8.peg.845"/>
<dbReference type="HOGENOM" id="CLU_065038_1_0_4"/>
<dbReference type="InParanoid" id="Q9K0D6"/>
<dbReference type="OrthoDB" id="9815559at2"/>
<dbReference type="BRENDA" id="2.7.7.38">
    <property type="organism ID" value="3593"/>
</dbReference>
<dbReference type="UniPathway" id="UPA00030"/>
<dbReference type="UniPathway" id="UPA00358">
    <property type="reaction ID" value="UER00476"/>
</dbReference>
<dbReference type="Proteomes" id="UP000000425">
    <property type="component" value="Chromosome"/>
</dbReference>
<dbReference type="GO" id="GO:0005829">
    <property type="term" value="C:cytosol"/>
    <property type="evidence" value="ECO:0000318"/>
    <property type="project" value="GO_Central"/>
</dbReference>
<dbReference type="GO" id="GO:0008690">
    <property type="term" value="F:3-deoxy-manno-octulosonate cytidylyltransferase activity"/>
    <property type="evidence" value="ECO:0000318"/>
    <property type="project" value="GO_Central"/>
</dbReference>
<dbReference type="GO" id="GO:0033468">
    <property type="term" value="P:CMP-keto-3-deoxy-D-manno-octulosonic acid biosynthetic process"/>
    <property type="evidence" value="ECO:0007669"/>
    <property type="project" value="UniProtKB-UniRule"/>
</dbReference>
<dbReference type="GO" id="GO:0009103">
    <property type="term" value="P:lipopolysaccharide biosynthetic process"/>
    <property type="evidence" value="ECO:0007669"/>
    <property type="project" value="UniProtKB-UniRule"/>
</dbReference>
<dbReference type="CDD" id="cd02517">
    <property type="entry name" value="CMP-KDO-Synthetase"/>
    <property type="match status" value="1"/>
</dbReference>
<dbReference type="FunFam" id="3.90.550.10:FF:000011">
    <property type="entry name" value="3-deoxy-manno-octulosonate cytidylyltransferase"/>
    <property type="match status" value="1"/>
</dbReference>
<dbReference type="Gene3D" id="3.90.550.10">
    <property type="entry name" value="Spore Coat Polysaccharide Biosynthesis Protein SpsA, Chain A"/>
    <property type="match status" value="1"/>
</dbReference>
<dbReference type="HAMAP" id="MF_00057">
    <property type="entry name" value="KdsB"/>
    <property type="match status" value="1"/>
</dbReference>
<dbReference type="InterPro" id="IPR003329">
    <property type="entry name" value="Cytidylyl_trans"/>
</dbReference>
<dbReference type="InterPro" id="IPR004528">
    <property type="entry name" value="KdsB"/>
</dbReference>
<dbReference type="InterPro" id="IPR029044">
    <property type="entry name" value="Nucleotide-diphossugar_trans"/>
</dbReference>
<dbReference type="NCBIfam" id="TIGR00466">
    <property type="entry name" value="kdsB"/>
    <property type="match status" value="1"/>
</dbReference>
<dbReference type="NCBIfam" id="NF003952">
    <property type="entry name" value="PRK05450.1-5"/>
    <property type="match status" value="1"/>
</dbReference>
<dbReference type="NCBIfam" id="NF009905">
    <property type="entry name" value="PRK13368.1"/>
    <property type="match status" value="1"/>
</dbReference>
<dbReference type="PANTHER" id="PTHR42866">
    <property type="entry name" value="3-DEOXY-MANNO-OCTULOSONATE CYTIDYLYLTRANSFERASE"/>
    <property type="match status" value="1"/>
</dbReference>
<dbReference type="PANTHER" id="PTHR42866:SF2">
    <property type="entry name" value="3-DEOXY-MANNO-OCTULOSONATE CYTIDYLYLTRANSFERASE, MITOCHONDRIAL"/>
    <property type="match status" value="1"/>
</dbReference>
<dbReference type="Pfam" id="PF02348">
    <property type="entry name" value="CTP_transf_3"/>
    <property type="match status" value="1"/>
</dbReference>
<dbReference type="SUPFAM" id="SSF53448">
    <property type="entry name" value="Nucleotide-diphospho-sugar transferases"/>
    <property type="match status" value="1"/>
</dbReference>
<reference key="1">
    <citation type="journal article" date="2000" name="Science">
        <title>Complete genome sequence of Neisseria meningitidis serogroup B strain MC58.</title>
        <authorList>
            <person name="Tettelin H."/>
            <person name="Saunders N.J."/>
            <person name="Heidelberg J.F."/>
            <person name="Jeffries A.C."/>
            <person name="Nelson K.E."/>
            <person name="Eisen J.A."/>
            <person name="Ketchum K.A."/>
            <person name="Hood D.W."/>
            <person name="Peden J.F."/>
            <person name="Dodson R.J."/>
            <person name="Nelson W.C."/>
            <person name="Gwinn M.L."/>
            <person name="DeBoy R.T."/>
            <person name="Peterson J.D."/>
            <person name="Hickey E.K."/>
            <person name="Haft D.H."/>
            <person name="Salzberg S.L."/>
            <person name="White O."/>
            <person name="Fleischmann R.D."/>
            <person name="Dougherty B.A."/>
            <person name="Mason T.M."/>
            <person name="Ciecko A."/>
            <person name="Parksey D.S."/>
            <person name="Blair E."/>
            <person name="Cittone H."/>
            <person name="Clark E.B."/>
            <person name="Cotton M.D."/>
            <person name="Utterback T.R."/>
            <person name="Khouri H.M."/>
            <person name="Qin H."/>
            <person name="Vamathevan J.J."/>
            <person name="Gill J."/>
            <person name="Scarlato V."/>
            <person name="Masignani V."/>
            <person name="Pizza M."/>
            <person name="Grandi G."/>
            <person name="Sun L."/>
            <person name="Smith H.O."/>
            <person name="Fraser C.M."/>
            <person name="Moxon E.R."/>
            <person name="Rappuoli R."/>
            <person name="Venter J.C."/>
        </authorList>
    </citation>
    <scope>NUCLEOTIDE SEQUENCE [LARGE SCALE GENOMIC DNA]</scope>
    <source>
        <strain>ATCC BAA-335 / MC58</strain>
    </source>
</reference>
<evidence type="ECO:0000255" key="1">
    <source>
        <dbReference type="HAMAP-Rule" id="MF_00057"/>
    </source>
</evidence>
<gene>
    <name evidence="1" type="primary">kdsB</name>
    <name type="ordered locus">NMB0675</name>
</gene>
<keyword id="KW-0963">Cytoplasm</keyword>
<keyword id="KW-0448">Lipopolysaccharide biosynthesis</keyword>
<keyword id="KW-0548">Nucleotidyltransferase</keyword>
<keyword id="KW-1185">Reference proteome</keyword>
<keyword id="KW-0808">Transferase</keyword>
<accession>Q9K0D6</accession>
<comment type="function">
    <text evidence="1">Activates KDO (a required 8-carbon sugar) for incorporation into bacterial lipopolysaccharide in Gram-negative bacteria.</text>
</comment>
<comment type="catalytic activity">
    <reaction evidence="1">
        <text>3-deoxy-alpha-D-manno-oct-2-ulosonate + CTP = CMP-3-deoxy-beta-D-manno-octulosonate + diphosphate</text>
        <dbReference type="Rhea" id="RHEA:23448"/>
        <dbReference type="ChEBI" id="CHEBI:33019"/>
        <dbReference type="ChEBI" id="CHEBI:37563"/>
        <dbReference type="ChEBI" id="CHEBI:85986"/>
        <dbReference type="ChEBI" id="CHEBI:85987"/>
        <dbReference type="EC" id="2.7.7.38"/>
    </reaction>
</comment>
<comment type="pathway">
    <text evidence="1">Nucleotide-sugar biosynthesis; CMP-3-deoxy-D-manno-octulosonate biosynthesis; CMP-3-deoxy-D-manno-octulosonate from 3-deoxy-D-manno-octulosonate and CTP: step 1/1.</text>
</comment>
<comment type="pathway">
    <text evidence="1">Bacterial outer membrane biogenesis; lipopolysaccharide biosynthesis.</text>
</comment>
<comment type="subcellular location">
    <subcellularLocation>
        <location evidence="1">Cytoplasm</location>
    </subcellularLocation>
</comment>
<comment type="similarity">
    <text evidence="1">Belongs to the KdsB family.</text>
</comment>
<sequence length="253" mass="27834">MTEFVVLIPARLDSSRLPGKALADIHGKPMVVRVAEQAAKSKAARVVVATDHPDIQTACQAHGIEVVMTSNRHESGTTRLAEASVALKLPPHLIVVNVQGDEPLIAPELIDRTAEVLVENNVQMATAAHELHDFDELMNPNAVKVVLDKNRNAIYFSRAPIPYPRDAIRAGKREMPSETAVLRHIGIYAYRAGFLQRYAEMSVSPLETIESLEQLRVLWHGYPIAVETAKEAPAAGVDTQEDLDRVRAVFQTV</sequence>
<name>KDSB_NEIMB</name>
<protein>
    <recommendedName>
        <fullName evidence="1">3-deoxy-manno-octulosonate cytidylyltransferase</fullName>
        <ecNumber evidence="1">2.7.7.38</ecNumber>
    </recommendedName>
    <alternativeName>
        <fullName evidence="1">CMP-2-keto-3-deoxyoctulosonic acid synthase</fullName>
        <shortName evidence="1">CKS</shortName>
        <shortName evidence="1">CMP-KDO synthase</shortName>
    </alternativeName>
</protein>
<organism>
    <name type="scientific">Neisseria meningitidis serogroup B (strain ATCC BAA-335 / MC58)</name>
    <dbReference type="NCBI Taxonomy" id="122586"/>
    <lineage>
        <taxon>Bacteria</taxon>
        <taxon>Pseudomonadati</taxon>
        <taxon>Pseudomonadota</taxon>
        <taxon>Betaproteobacteria</taxon>
        <taxon>Neisseriales</taxon>
        <taxon>Neisseriaceae</taxon>
        <taxon>Neisseria</taxon>
    </lineage>
</organism>